<accession>Q45288</accession>
<keyword id="KW-0002">3D-structure</keyword>
<keyword id="KW-0963">Cytoplasm</keyword>
<keyword id="KW-0251">Elongation factor</keyword>
<keyword id="KW-0648">Protein biosynthesis</keyword>
<keyword id="KW-1185">Reference proteome</keyword>
<feature type="chain" id="PRO_0000094240" description="Elongation factor P">
    <location>
        <begin position="1"/>
        <end position="187"/>
    </location>
</feature>
<feature type="sequence conflict" description="In Ref. 1; CAA67673." evidence="2" ref="1">
    <original>RDV</original>
    <variation>PRC</variation>
    <location>
        <begin position="68"/>
        <end position="70"/>
    </location>
</feature>
<feature type="helix" evidence="3">
    <location>
        <begin position="4"/>
        <end position="6"/>
    </location>
</feature>
<feature type="strand" evidence="3">
    <location>
        <begin position="12"/>
        <end position="15"/>
    </location>
</feature>
<feature type="strand" evidence="3">
    <location>
        <begin position="18"/>
        <end position="28"/>
    </location>
</feature>
<feature type="strand" evidence="3">
    <location>
        <begin position="31"/>
        <end position="33"/>
    </location>
</feature>
<feature type="strand" evidence="3">
    <location>
        <begin position="36"/>
        <end position="43"/>
    </location>
</feature>
<feature type="turn" evidence="3">
    <location>
        <begin position="44"/>
        <end position="46"/>
    </location>
</feature>
<feature type="strand" evidence="3">
    <location>
        <begin position="49"/>
        <end position="55"/>
    </location>
</feature>
<feature type="strand" evidence="3">
    <location>
        <begin position="66"/>
        <end position="75"/>
    </location>
</feature>
<feature type="strand" evidence="3">
    <location>
        <begin position="77"/>
        <end position="84"/>
    </location>
</feature>
<feature type="turn" evidence="3">
    <location>
        <begin position="85"/>
        <end position="87"/>
    </location>
</feature>
<feature type="strand" evidence="3">
    <location>
        <begin position="90"/>
        <end position="93"/>
    </location>
</feature>
<feature type="turn" evidence="3">
    <location>
        <begin position="95"/>
        <end position="98"/>
    </location>
</feature>
<feature type="helix" evidence="3">
    <location>
        <begin position="99"/>
        <end position="104"/>
    </location>
</feature>
<feature type="strand" evidence="3">
    <location>
        <begin position="110"/>
        <end position="116"/>
    </location>
</feature>
<feature type="strand" evidence="3">
    <location>
        <begin position="119"/>
        <end position="124"/>
    </location>
</feature>
<feature type="strand" evidence="3">
    <location>
        <begin position="127"/>
        <end position="137"/>
    </location>
</feature>
<feature type="strand" evidence="3">
    <location>
        <begin position="149"/>
        <end position="154"/>
    </location>
</feature>
<feature type="strand" evidence="3">
    <location>
        <begin position="159"/>
        <end position="163"/>
    </location>
</feature>
<feature type="strand" evidence="3">
    <location>
        <begin position="171"/>
        <end position="175"/>
    </location>
</feature>
<feature type="turn" evidence="3">
    <location>
        <begin position="176"/>
        <end position="179"/>
    </location>
</feature>
<feature type="strand" evidence="3">
    <location>
        <begin position="180"/>
        <end position="185"/>
    </location>
</feature>
<protein>
    <recommendedName>
        <fullName>Elongation factor P</fullName>
        <shortName>EF-P</shortName>
    </recommendedName>
</protein>
<dbReference type="EMBL" id="X99289">
    <property type="protein sequence ID" value="CAA67673.1"/>
    <property type="molecule type" value="Genomic_DNA"/>
</dbReference>
<dbReference type="EMBL" id="BA000036">
    <property type="protein sequence ID" value="BAB99012.1"/>
    <property type="molecule type" value="Genomic_DNA"/>
</dbReference>
<dbReference type="EMBL" id="BX927152">
    <property type="protein sequence ID" value="CAF21628.1"/>
    <property type="molecule type" value="Genomic_DNA"/>
</dbReference>
<dbReference type="RefSeq" id="NP_600833.1">
    <property type="nucleotide sequence ID" value="NC_003450.3"/>
</dbReference>
<dbReference type="RefSeq" id="WP_003855973.1">
    <property type="nucleotide sequence ID" value="NC_006958.1"/>
</dbReference>
<dbReference type="PDB" id="6S8Z">
    <property type="method" value="X-ray"/>
    <property type="resolution" value="2.20 A"/>
    <property type="chains" value="A=1-187"/>
</dbReference>
<dbReference type="PDBsum" id="6S8Z"/>
<dbReference type="SMR" id="Q45288"/>
<dbReference type="STRING" id="196627.cg1825"/>
<dbReference type="GeneID" id="1019588"/>
<dbReference type="KEGG" id="cgb:cg1825"/>
<dbReference type="KEGG" id="cgl:Cgl1619"/>
<dbReference type="PATRIC" id="fig|196627.13.peg.1581"/>
<dbReference type="eggNOG" id="COG0231">
    <property type="taxonomic scope" value="Bacteria"/>
</dbReference>
<dbReference type="HOGENOM" id="CLU_074944_0_1_11"/>
<dbReference type="OrthoDB" id="9801844at2"/>
<dbReference type="BioCyc" id="CORYNE:G18NG-11204-MONOMER"/>
<dbReference type="UniPathway" id="UPA00345"/>
<dbReference type="Proteomes" id="UP000000582">
    <property type="component" value="Chromosome"/>
</dbReference>
<dbReference type="Proteomes" id="UP000001009">
    <property type="component" value="Chromosome"/>
</dbReference>
<dbReference type="GO" id="GO:0005737">
    <property type="term" value="C:cytoplasm"/>
    <property type="evidence" value="ECO:0007669"/>
    <property type="project" value="UniProtKB-SubCell"/>
</dbReference>
<dbReference type="GO" id="GO:0003746">
    <property type="term" value="F:translation elongation factor activity"/>
    <property type="evidence" value="ECO:0007669"/>
    <property type="project" value="UniProtKB-UniRule"/>
</dbReference>
<dbReference type="GO" id="GO:0043043">
    <property type="term" value="P:peptide biosynthetic process"/>
    <property type="evidence" value="ECO:0007669"/>
    <property type="project" value="InterPro"/>
</dbReference>
<dbReference type="CDD" id="cd04470">
    <property type="entry name" value="S1_EF-P_repeat_1"/>
    <property type="match status" value="1"/>
</dbReference>
<dbReference type="CDD" id="cd05794">
    <property type="entry name" value="S1_EF-P_repeat_2"/>
    <property type="match status" value="1"/>
</dbReference>
<dbReference type="FunFam" id="2.30.30.30:FF:000003">
    <property type="entry name" value="Elongation factor P"/>
    <property type="match status" value="1"/>
</dbReference>
<dbReference type="FunFam" id="2.40.50.140:FF:000004">
    <property type="entry name" value="Elongation factor P"/>
    <property type="match status" value="1"/>
</dbReference>
<dbReference type="FunFam" id="2.40.50.140:FF:000009">
    <property type="entry name" value="Elongation factor P"/>
    <property type="match status" value="1"/>
</dbReference>
<dbReference type="Gene3D" id="2.30.30.30">
    <property type="match status" value="1"/>
</dbReference>
<dbReference type="Gene3D" id="2.40.50.140">
    <property type="entry name" value="Nucleic acid-binding proteins"/>
    <property type="match status" value="2"/>
</dbReference>
<dbReference type="HAMAP" id="MF_00141">
    <property type="entry name" value="EF_P"/>
    <property type="match status" value="1"/>
</dbReference>
<dbReference type="InterPro" id="IPR015365">
    <property type="entry name" value="Elong-fact-P_C"/>
</dbReference>
<dbReference type="InterPro" id="IPR012340">
    <property type="entry name" value="NA-bd_OB-fold"/>
</dbReference>
<dbReference type="InterPro" id="IPR014722">
    <property type="entry name" value="Rib_uL2_dom2"/>
</dbReference>
<dbReference type="InterPro" id="IPR020599">
    <property type="entry name" value="Transl_elong_fac_P/YeiP"/>
</dbReference>
<dbReference type="InterPro" id="IPR013185">
    <property type="entry name" value="Transl_elong_KOW-like"/>
</dbReference>
<dbReference type="InterPro" id="IPR001059">
    <property type="entry name" value="Transl_elong_P/YeiP_cen"/>
</dbReference>
<dbReference type="InterPro" id="IPR013852">
    <property type="entry name" value="Transl_elong_P/YeiP_CS"/>
</dbReference>
<dbReference type="InterPro" id="IPR011768">
    <property type="entry name" value="Transl_elongation_fac_P"/>
</dbReference>
<dbReference type="InterPro" id="IPR008991">
    <property type="entry name" value="Translation_prot_SH3-like_sf"/>
</dbReference>
<dbReference type="NCBIfam" id="TIGR00038">
    <property type="entry name" value="efp"/>
    <property type="match status" value="1"/>
</dbReference>
<dbReference type="NCBIfam" id="NF001810">
    <property type="entry name" value="PRK00529.1"/>
    <property type="match status" value="1"/>
</dbReference>
<dbReference type="PANTHER" id="PTHR30053">
    <property type="entry name" value="ELONGATION FACTOR P"/>
    <property type="match status" value="1"/>
</dbReference>
<dbReference type="PANTHER" id="PTHR30053:SF12">
    <property type="entry name" value="ELONGATION FACTOR P (EF-P) FAMILY PROTEIN"/>
    <property type="match status" value="1"/>
</dbReference>
<dbReference type="Pfam" id="PF01132">
    <property type="entry name" value="EFP"/>
    <property type="match status" value="1"/>
</dbReference>
<dbReference type="Pfam" id="PF08207">
    <property type="entry name" value="EFP_N"/>
    <property type="match status" value="1"/>
</dbReference>
<dbReference type="Pfam" id="PF09285">
    <property type="entry name" value="Elong-fact-P_C"/>
    <property type="match status" value="1"/>
</dbReference>
<dbReference type="PIRSF" id="PIRSF005901">
    <property type="entry name" value="EF-P"/>
    <property type="match status" value="1"/>
</dbReference>
<dbReference type="SMART" id="SM01185">
    <property type="entry name" value="EFP"/>
    <property type="match status" value="1"/>
</dbReference>
<dbReference type="SMART" id="SM00841">
    <property type="entry name" value="Elong-fact-P_C"/>
    <property type="match status" value="1"/>
</dbReference>
<dbReference type="SUPFAM" id="SSF50249">
    <property type="entry name" value="Nucleic acid-binding proteins"/>
    <property type="match status" value="2"/>
</dbReference>
<dbReference type="SUPFAM" id="SSF50104">
    <property type="entry name" value="Translation proteins SH3-like domain"/>
    <property type="match status" value="1"/>
</dbReference>
<dbReference type="PROSITE" id="PS01275">
    <property type="entry name" value="EFP"/>
    <property type="match status" value="1"/>
</dbReference>
<organism>
    <name type="scientific">Corynebacterium glutamicum (strain ATCC 13032 / DSM 20300 / JCM 1318 / BCRC 11384 / CCUG 27702 / LMG 3730 / NBRC 12168 / NCIMB 10025 / NRRL B-2784 / 534)</name>
    <dbReference type="NCBI Taxonomy" id="196627"/>
    <lineage>
        <taxon>Bacteria</taxon>
        <taxon>Bacillati</taxon>
        <taxon>Actinomycetota</taxon>
        <taxon>Actinomycetes</taxon>
        <taxon>Mycobacteriales</taxon>
        <taxon>Corynebacteriaceae</taxon>
        <taxon>Corynebacterium</taxon>
    </lineage>
</organism>
<evidence type="ECO:0000250" key="1"/>
<evidence type="ECO:0000305" key="2"/>
<evidence type="ECO:0007829" key="3">
    <source>
        <dbReference type="PDB" id="6S8Z"/>
    </source>
</evidence>
<comment type="function">
    <text evidence="1">Involved in peptide bond synthesis. Stimulates efficient translation and peptide-bond synthesis on native or reconstituted 70S ribosomes in vitro. Probably functions indirectly by altering the affinity of the ribosome for aminoacyl-tRNA, thus increasing their reactivity as acceptors for peptidyl transferase (By similarity).</text>
</comment>
<comment type="pathway">
    <text>Protein biosynthesis; polypeptide chain elongation.</text>
</comment>
<comment type="subcellular location">
    <subcellularLocation>
        <location evidence="1">Cytoplasm</location>
    </subcellularLocation>
</comment>
<comment type="similarity">
    <text evidence="2">Belongs to the elongation factor P family.</text>
</comment>
<name>EFP_CORGL</name>
<sequence>MATTADFKNGLVLKNEGKLQQIIEFQHVKPGKGPAFVRTKLKDVVTGKTIDKTWNAGVKVETATVDRRDVTYLYNDGTSFIVMDDKTFEQYELSPDAFGDAGRFLLENMRVQVSFHEGEALFGELPVSVDLRVEHTDPGLQGDRSTGGTKPATLETGAEIQVPLFIETGNVLKVDTRDGSYLSRVNN</sequence>
<proteinExistence type="evidence at protein level"/>
<reference key="1">
    <citation type="journal article" date="1997" name="Gene">
        <title>Cloning, sequencing and expression of the gene encoding elongation factor P in the amino-acid producer Brevibacterium lactofermentum (Corynebacterium glutamicum ATCC 13869).</title>
        <authorList>
            <person name="Ramos A."/>
            <person name="Macias J.R."/>
            <person name="Gil J.A."/>
        </authorList>
    </citation>
    <scope>NUCLEOTIDE SEQUENCE [GENOMIC DNA]</scope>
    <source>
        <strain>ATCC 13869 / DSMZ 1412 / NCIMB 9567</strain>
    </source>
</reference>
<reference key="2">
    <citation type="journal article" date="2003" name="Appl. Microbiol. Biotechnol.">
        <title>The Corynebacterium glutamicum genome: features and impacts on biotechnological processes.</title>
        <authorList>
            <person name="Ikeda M."/>
            <person name="Nakagawa S."/>
        </authorList>
    </citation>
    <scope>NUCLEOTIDE SEQUENCE [LARGE SCALE GENOMIC DNA]</scope>
    <source>
        <strain>ATCC 13032 / DSM 20300 / JCM 1318 / BCRC 11384 / CCUG 27702 / LMG 3730 / NBRC 12168 / NCIMB 10025 / NRRL B-2784 / 534</strain>
    </source>
</reference>
<reference key="3">
    <citation type="journal article" date="2003" name="J. Biotechnol.">
        <title>The complete Corynebacterium glutamicum ATCC 13032 genome sequence and its impact on the production of L-aspartate-derived amino acids and vitamins.</title>
        <authorList>
            <person name="Kalinowski J."/>
            <person name="Bathe B."/>
            <person name="Bartels D."/>
            <person name="Bischoff N."/>
            <person name="Bott M."/>
            <person name="Burkovski A."/>
            <person name="Dusch N."/>
            <person name="Eggeling L."/>
            <person name="Eikmanns B.J."/>
            <person name="Gaigalat L."/>
            <person name="Goesmann A."/>
            <person name="Hartmann M."/>
            <person name="Huthmacher K."/>
            <person name="Kraemer R."/>
            <person name="Linke B."/>
            <person name="McHardy A.C."/>
            <person name="Meyer F."/>
            <person name="Moeckel B."/>
            <person name="Pfefferle W."/>
            <person name="Puehler A."/>
            <person name="Rey D.A."/>
            <person name="Rueckert C."/>
            <person name="Rupp O."/>
            <person name="Sahm H."/>
            <person name="Wendisch V.F."/>
            <person name="Wiegraebe I."/>
            <person name="Tauch A."/>
        </authorList>
    </citation>
    <scope>NUCLEOTIDE SEQUENCE [LARGE SCALE GENOMIC DNA]</scope>
    <source>
        <strain>ATCC 13032 / DSM 20300 / JCM 1318 / BCRC 11384 / CCUG 27702 / LMG 3730 / NBRC 12168 / NCIMB 10025 / NRRL B-2784 / 534</strain>
    </source>
</reference>
<gene>
    <name type="primary">efp</name>
    <name type="ordered locus">Cgl1619</name>
    <name type="ordered locus">cg1825</name>
</gene>